<evidence type="ECO:0000250" key="1">
    <source>
        <dbReference type="UniProtKB" id="Q06058"/>
    </source>
</evidence>
<evidence type="ECO:0000255" key="2"/>
<evidence type="ECO:0000269" key="3">
    <source>
    </source>
</evidence>
<evidence type="ECO:0000305" key="4"/>
<evidence type="ECO:0000312" key="5">
    <source>
        <dbReference type="PomBase" id="SPAC3A11.04"/>
    </source>
</evidence>
<organism>
    <name type="scientific">Schizosaccharomyces pombe (strain 972 / ATCC 24843)</name>
    <name type="common">Fission yeast</name>
    <dbReference type="NCBI Taxonomy" id="284812"/>
    <lineage>
        <taxon>Eukaryota</taxon>
        <taxon>Fungi</taxon>
        <taxon>Dikarya</taxon>
        <taxon>Ascomycota</taxon>
        <taxon>Taphrinomycotina</taxon>
        <taxon>Schizosaccharomycetes</taxon>
        <taxon>Schizosaccharomycetales</taxon>
        <taxon>Schizosaccharomycetaceae</taxon>
        <taxon>Schizosaccharomyces</taxon>
    </lineage>
</organism>
<name>BSCLH_SCHPO</name>
<gene>
    <name evidence="5" type="ORF">SPAC3A11.04</name>
</gene>
<comment type="function">
    <text evidence="1">Involved in lipid metabolism and lipid droplet (LD) morphology, number, and size. Facilitates initiation of LD formation, and ensures that vectorial budding of LDs from the ER is directed towards the cytoplasm.</text>
</comment>
<comment type="subcellular location">
    <subcellularLocation>
        <location evidence="3">Endoplasmic reticulum membrane</location>
        <topology evidence="2">Multi-pass membrane protein</topology>
    </subcellularLocation>
    <text evidence="1">Concentrates at endoplasmic reticulum lipid droplet junctions.</text>
</comment>
<comment type="similarity">
    <text evidence="4">Belongs to the seipin family.</text>
</comment>
<accession>O14119</accession>
<feature type="chain" id="PRO_0000341580" description="Seipin homolog">
    <location>
        <begin position="1"/>
        <end position="249"/>
    </location>
</feature>
<feature type="topological domain" description="Cytoplasmic" evidence="1">
    <location>
        <begin position="1"/>
        <end position="10"/>
    </location>
</feature>
<feature type="transmembrane region" description="Helical" evidence="2">
    <location>
        <begin position="11"/>
        <end position="31"/>
    </location>
</feature>
<feature type="topological domain" description="Lumenal" evidence="1">
    <location>
        <begin position="32"/>
        <end position="212"/>
    </location>
</feature>
<feature type="transmembrane region" description="Helical" evidence="2">
    <location>
        <begin position="213"/>
        <end position="233"/>
    </location>
</feature>
<feature type="topological domain" description="Cytoplasmic" evidence="1">
    <location>
        <begin position="234"/>
        <end position="249"/>
    </location>
</feature>
<keyword id="KW-0256">Endoplasmic reticulum</keyword>
<keyword id="KW-0443">Lipid metabolism</keyword>
<keyword id="KW-0472">Membrane</keyword>
<keyword id="KW-1185">Reference proteome</keyword>
<keyword id="KW-0812">Transmembrane</keyword>
<keyword id="KW-1133">Transmembrane helix</keyword>
<reference key="1">
    <citation type="journal article" date="2002" name="Nature">
        <title>The genome sequence of Schizosaccharomyces pombe.</title>
        <authorList>
            <person name="Wood V."/>
            <person name="Gwilliam R."/>
            <person name="Rajandream M.A."/>
            <person name="Lyne M.H."/>
            <person name="Lyne R."/>
            <person name="Stewart A."/>
            <person name="Sgouros J.G."/>
            <person name="Peat N."/>
            <person name="Hayles J."/>
            <person name="Baker S.G."/>
            <person name="Basham D."/>
            <person name="Bowman S."/>
            <person name="Brooks K."/>
            <person name="Brown D."/>
            <person name="Brown S."/>
            <person name="Chillingworth T."/>
            <person name="Churcher C.M."/>
            <person name="Collins M."/>
            <person name="Connor R."/>
            <person name="Cronin A."/>
            <person name="Davis P."/>
            <person name="Feltwell T."/>
            <person name="Fraser A."/>
            <person name="Gentles S."/>
            <person name="Goble A."/>
            <person name="Hamlin N."/>
            <person name="Harris D.E."/>
            <person name="Hidalgo J."/>
            <person name="Hodgson G."/>
            <person name="Holroyd S."/>
            <person name="Hornsby T."/>
            <person name="Howarth S."/>
            <person name="Huckle E.J."/>
            <person name="Hunt S."/>
            <person name="Jagels K."/>
            <person name="James K.D."/>
            <person name="Jones L."/>
            <person name="Jones M."/>
            <person name="Leather S."/>
            <person name="McDonald S."/>
            <person name="McLean J."/>
            <person name="Mooney P."/>
            <person name="Moule S."/>
            <person name="Mungall K.L."/>
            <person name="Murphy L.D."/>
            <person name="Niblett D."/>
            <person name="Odell C."/>
            <person name="Oliver K."/>
            <person name="O'Neil S."/>
            <person name="Pearson D."/>
            <person name="Quail M.A."/>
            <person name="Rabbinowitsch E."/>
            <person name="Rutherford K.M."/>
            <person name="Rutter S."/>
            <person name="Saunders D."/>
            <person name="Seeger K."/>
            <person name="Sharp S."/>
            <person name="Skelton J."/>
            <person name="Simmonds M.N."/>
            <person name="Squares R."/>
            <person name="Squares S."/>
            <person name="Stevens K."/>
            <person name="Taylor K."/>
            <person name="Taylor R.G."/>
            <person name="Tivey A."/>
            <person name="Walsh S.V."/>
            <person name="Warren T."/>
            <person name="Whitehead S."/>
            <person name="Woodward J.R."/>
            <person name="Volckaert G."/>
            <person name="Aert R."/>
            <person name="Robben J."/>
            <person name="Grymonprez B."/>
            <person name="Weltjens I."/>
            <person name="Vanstreels E."/>
            <person name="Rieger M."/>
            <person name="Schaefer M."/>
            <person name="Mueller-Auer S."/>
            <person name="Gabel C."/>
            <person name="Fuchs M."/>
            <person name="Duesterhoeft A."/>
            <person name="Fritzc C."/>
            <person name="Holzer E."/>
            <person name="Moestl D."/>
            <person name="Hilbert H."/>
            <person name="Borzym K."/>
            <person name="Langer I."/>
            <person name="Beck A."/>
            <person name="Lehrach H."/>
            <person name="Reinhardt R."/>
            <person name="Pohl T.M."/>
            <person name="Eger P."/>
            <person name="Zimmermann W."/>
            <person name="Wedler H."/>
            <person name="Wambutt R."/>
            <person name="Purnelle B."/>
            <person name="Goffeau A."/>
            <person name="Cadieu E."/>
            <person name="Dreano S."/>
            <person name="Gloux S."/>
            <person name="Lelaure V."/>
            <person name="Mottier S."/>
            <person name="Galibert F."/>
            <person name="Aves S.J."/>
            <person name="Xiang Z."/>
            <person name="Hunt C."/>
            <person name="Moore K."/>
            <person name="Hurst S.M."/>
            <person name="Lucas M."/>
            <person name="Rochet M."/>
            <person name="Gaillardin C."/>
            <person name="Tallada V.A."/>
            <person name="Garzon A."/>
            <person name="Thode G."/>
            <person name="Daga R.R."/>
            <person name="Cruzado L."/>
            <person name="Jimenez J."/>
            <person name="Sanchez M."/>
            <person name="del Rey F."/>
            <person name="Benito J."/>
            <person name="Dominguez A."/>
            <person name="Revuelta J.L."/>
            <person name="Moreno S."/>
            <person name="Armstrong J."/>
            <person name="Forsburg S.L."/>
            <person name="Cerutti L."/>
            <person name="Lowe T."/>
            <person name="McCombie W.R."/>
            <person name="Paulsen I."/>
            <person name="Potashkin J."/>
            <person name="Shpakovski G.V."/>
            <person name="Ussery D."/>
            <person name="Barrell B.G."/>
            <person name="Nurse P."/>
        </authorList>
    </citation>
    <scope>NUCLEOTIDE SEQUENCE [LARGE SCALE GENOMIC DNA]</scope>
    <source>
        <strain>972 / ATCC 24843</strain>
    </source>
</reference>
<reference key="2">
    <citation type="journal article" date="2011" name="Science">
        <title>Comparative functional genomics of the fission yeasts.</title>
        <authorList>
            <person name="Rhind N."/>
            <person name="Chen Z."/>
            <person name="Yassour M."/>
            <person name="Thompson D.A."/>
            <person name="Haas B.J."/>
            <person name="Habib N."/>
            <person name="Wapinski I."/>
            <person name="Roy S."/>
            <person name="Lin M.F."/>
            <person name="Heiman D.I."/>
            <person name="Young S.K."/>
            <person name="Furuya K."/>
            <person name="Guo Y."/>
            <person name="Pidoux A."/>
            <person name="Chen H.M."/>
            <person name="Robbertse B."/>
            <person name="Goldberg J.M."/>
            <person name="Aoki K."/>
            <person name="Bayne E.H."/>
            <person name="Berlin A.M."/>
            <person name="Desjardins C.A."/>
            <person name="Dobbs E."/>
            <person name="Dukaj L."/>
            <person name="Fan L."/>
            <person name="FitzGerald M.G."/>
            <person name="French C."/>
            <person name="Gujja S."/>
            <person name="Hansen K."/>
            <person name="Keifenheim D."/>
            <person name="Levin J.Z."/>
            <person name="Mosher R.A."/>
            <person name="Mueller C.A."/>
            <person name="Pfiffner J."/>
            <person name="Priest M."/>
            <person name="Russ C."/>
            <person name="Smialowska A."/>
            <person name="Swoboda P."/>
            <person name="Sykes S.M."/>
            <person name="Vaughn M."/>
            <person name="Vengrova S."/>
            <person name="Yoder R."/>
            <person name="Zeng Q."/>
            <person name="Allshire R."/>
            <person name="Baulcombe D."/>
            <person name="Birren B.W."/>
            <person name="Brown W."/>
            <person name="Ekwall K."/>
            <person name="Kellis M."/>
            <person name="Leatherwood J."/>
            <person name="Levin H."/>
            <person name="Margalit H."/>
            <person name="Martienssen R."/>
            <person name="Nieduszynski C.A."/>
            <person name="Spatafora J.W."/>
            <person name="Friedman N."/>
            <person name="Dalgaard J.Z."/>
            <person name="Baumann P."/>
            <person name="Niki H."/>
            <person name="Regev A."/>
            <person name="Nusbaum C."/>
        </authorList>
    </citation>
    <scope>REVISION OF GENE MODEL</scope>
</reference>
<reference key="3">
    <citation type="journal article" date="2006" name="Nat. Biotechnol.">
        <title>ORFeome cloning and global analysis of protein localization in the fission yeast Schizosaccharomyces pombe.</title>
        <authorList>
            <person name="Matsuyama A."/>
            <person name="Arai R."/>
            <person name="Yashiroda Y."/>
            <person name="Shirai A."/>
            <person name="Kamata A."/>
            <person name="Sekido S."/>
            <person name="Kobayashi Y."/>
            <person name="Hashimoto A."/>
            <person name="Hamamoto M."/>
            <person name="Hiraoka Y."/>
            <person name="Horinouchi S."/>
            <person name="Yoshida M."/>
        </authorList>
    </citation>
    <scope>SUBCELLULAR LOCATION [LARGE SCALE ANALYSIS]</scope>
</reference>
<proteinExistence type="inferred from homology"/>
<sequence length="249" mass="28673">MGYLVKLFKLVVWMLVIGLFSIPSLVSYVIFYDTVIPHSVIQYPVYFNYTTGLNFPTAEVRLDHFSIDPRLPGTSLLQIKMPHSPRNSAMGNFMVSVDFQDRNQRSLKQVKRTVLLPHRSPIHEYLKLIVCSPLYFMGILEETDIVNVRLFESETFAKSFNSITTLSVRFSVKNTPAQAIVKIYSKDIEFYEATLAFASKLHGMRWFMYTHKVSAFLVFTSLFWFTGITSTIITYLIVSSTSETKATRR</sequence>
<dbReference type="EMBL" id="CU329670">
    <property type="protein sequence ID" value="CAB16380.3"/>
    <property type="molecule type" value="Genomic_DNA"/>
</dbReference>
<dbReference type="PIR" id="T11626">
    <property type="entry name" value="T11626"/>
</dbReference>
<dbReference type="RefSeq" id="NP_594199.2">
    <property type="nucleotide sequence ID" value="NM_001019623.2"/>
</dbReference>
<dbReference type="SMR" id="O14119"/>
<dbReference type="BioGRID" id="279490">
    <property type="interactions" value="13"/>
</dbReference>
<dbReference type="FunCoup" id="O14119">
    <property type="interactions" value="55"/>
</dbReference>
<dbReference type="STRING" id="284812.O14119"/>
<dbReference type="PaxDb" id="4896-SPAC3A11.04.1"/>
<dbReference type="EnsemblFungi" id="SPAC3A11.04.1">
    <property type="protein sequence ID" value="SPAC3A11.04.1:pep"/>
    <property type="gene ID" value="SPAC3A11.04"/>
</dbReference>
<dbReference type="PomBase" id="SPAC3A11.04"/>
<dbReference type="VEuPathDB" id="FungiDB:SPAC3A11.04"/>
<dbReference type="eggNOG" id="KOG4200">
    <property type="taxonomic scope" value="Eukaryota"/>
</dbReference>
<dbReference type="HOGENOM" id="CLU_043048_0_1_1"/>
<dbReference type="InParanoid" id="O14119"/>
<dbReference type="OMA" id="MVDTARQ"/>
<dbReference type="PRO" id="PR:O14119"/>
<dbReference type="Proteomes" id="UP000002485">
    <property type="component" value="Chromosome I"/>
</dbReference>
<dbReference type="GO" id="GO:0005783">
    <property type="term" value="C:endoplasmic reticulum"/>
    <property type="evidence" value="ECO:0007005"/>
    <property type="project" value="PomBase"/>
</dbReference>
<dbReference type="GO" id="GO:0005789">
    <property type="term" value="C:endoplasmic reticulum membrane"/>
    <property type="evidence" value="ECO:0000318"/>
    <property type="project" value="GO_Central"/>
</dbReference>
<dbReference type="GO" id="GO:0140042">
    <property type="term" value="P:lipid droplet formation"/>
    <property type="evidence" value="ECO:0000266"/>
    <property type="project" value="PomBase"/>
</dbReference>
<dbReference type="GO" id="GO:0034389">
    <property type="term" value="P:lipid droplet organization"/>
    <property type="evidence" value="ECO:0000318"/>
    <property type="project" value="GO_Central"/>
</dbReference>
<dbReference type="GO" id="GO:0006629">
    <property type="term" value="P:lipid metabolic process"/>
    <property type="evidence" value="ECO:0007669"/>
    <property type="project" value="UniProtKB-KW"/>
</dbReference>
<dbReference type="GO" id="GO:0019915">
    <property type="term" value="P:lipid storage"/>
    <property type="evidence" value="ECO:0000318"/>
    <property type="project" value="GO_Central"/>
</dbReference>
<dbReference type="CDD" id="cd23995">
    <property type="entry name" value="Seipin_BSCL2_like"/>
    <property type="match status" value="1"/>
</dbReference>
<dbReference type="InterPro" id="IPR009617">
    <property type="entry name" value="Seipin"/>
</dbReference>
<dbReference type="PANTHER" id="PTHR21212">
    <property type="entry name" value="BERNARDINELLI-SEIP CONGENITAL LIPODYSTROPHY 2 HOMOLOG BSCL2 PROTEIN"/>
    <property type="match status" value="1"/>
</dbReference>
<dbReference type="PANTHER" id="PTHR21212:SF0">
    <property type="entry name" value="SEIPIN"/>
    <property type="match status" value="1"/>
</dbReference>
<dbReference type="Pfam" id="PF06775">
    <property type="entry name" value="Seipin"/>
    <property type="match status" value="1"/>
</dbReference>
<protein>
    <recommendedName>
        <fullName evidence="1">Seipin homolog</fullName>
    </recommendedName>
</protein>